<accession>Q57695</accession>
<feature type="chain" id="PRO_0000103197" description="4-hydroxy-tetrahydrodipicolinate synthase">
    <location>
        <begin position="1"/>
        <end position="289"/>
    </location>
</feature>
<feature type="active site" description="Proton donor/acceptor" evidence="1">
    <location>
        <position position="132"/>
    </location>
</feature>
<feature type="active site" description="Schiff-base intermediate with substrate" evidence="1">
    <location>
        <position position="161"/>
    </location>
</feature>
<feature type="binding site" evidence="1">
    <location>
        <position position="44"/>
    </location>
    <ligand>
        <name>pyruvate</name>
        <dbReference type="ChEBI" id="CHEBI:15361"/>
    </ligand>
</feature>
<feature type="binding site" evidence="1">
    <location>
        <position position="201"/>
    </location>
    <ligand>
        <name>pyruvate</name>
        <dbReference type="ChEBI" id="CHEBI:15361"/>
    </ligand>
</feature>
<feature type="site" description="Part of a proton relay during catalysis" evidence="1">
    <location>
        <position position="43"/>
    </location>
</feature>
<feature type="site" description="Part of a proton relay during catalysis" evidence="1">
    <location>
        <position position="106"/>
    </location>
</feature>
<feature type="strand" evidence="4">
    <location>
        <begin position="4"/>
        <end position="8"/>
    </location>
</feature>
<feature type="helix" evidence="4">
    <location>
        <begin position="20"/>
        <end position="32"/>
    </location>
</feature>
<feature type="strand" evidence="4">
    <location>
        <begin position="36"/>
        <end position="42"/>
    </location>
</feature>
<feature type="turn" evidence="4">
    <location>
        <begin position="43"/>
        <end position="46"/>
    </location>
</feature>
<feature type="helix" evidence="4">
    <location>
        <begin position="47"/>
        <end position="49"/>
    </location>
</feature>
<feature type="helix" evidence="4">
    <location>
        <begin position="52"/>
        <end position="66"/>
    </location>
</feature>
<feature type="strand" evidence="4">
    <location>
        <begin position="69"/>
        <end position="75"/>
    </location>
</feature>
<feature type="helix" evidence="4">
    <location>
        <begin position="81"/>
        <end position="94"/>
    </location>
</feature>
<feature type="strand" evidence="4">
    <location>
        <begin position="97"/>
        <end position="102"/>
    </location>
</feature>
<feature type="helix" evidence="4">
    <location>
        <begin position="111"/>
        <end position="124"/>
    </location>
</feature>
<feature type="strand" evidence="4">
    <location>
        <begin position="129"/>
        <end position="133"/>
    </location>
</feature>
<feature type="helix" evidence="4">
    <location>
        <begin position="135"/>
        <end position="138"/>
    </location>
</feature>
<feature type="helix" evidence="4">
    <location>
        <begin position="144"/>
        <end position="153"/>
    </location>
</feature>
<feature type="strand" evidence="4">
    <location>
        <begin position="157"/>
        <end position="162"/>
    </location>
</feature>
<feature type="helix" evidence="4">
    <location>
        <begin position="168"/>
        <end position="176"/>
    </location>
</feature>
<feature type="strand" evidence="4">
    <location>
        <begin position="179"/>
        <end position="184"/>
    </location>
</feature>
<feature type="helix" evidence="4">
    <location>
        <begin position="186"/>
        <end position="188"/>
    </location>
</feature>
<feature type="helix" evidence="4">
    <location>
        <begin position="189"/>
        <end position="194"/>
    </location>
</feature>
<feature type="strand" evidence="4">
    <location>
        <begin position="199"/>
        <end position="203"/>
    </location>
</feature>
<feature type="helix" evidence="4">
    <location>
        <begin position="204"/>
        <end position="206"/>
    </location>
</feature>
<feature type="helix" evidence="4">
    <location>
        <begin position="209"/>
        <end position="221"/>
    </location>
</feature>
<feature type="helix" evidence="4">
    <location>
        <begin position="224"/>
        <end position="240"/>
    </location>
</feature>
<feature type="strand" evidence="4">
    <location>
        <begin position="243"/>
        <end position="245"/>
    </location>
</feature>
<feature type="helix" evidence="4">
    <location>
        <begin position="248"/>
        <end position="256"/>
    </location>
</feature>
<feature type="helix" evidence="4">
    <location>
        <begin position="273"/>
        <end position="285"/>
    </location>
</feature>
<organism>
    <name type="scientific">Methanocaldococcus jannaschii (strain ATCC 43067 / DSM 2661 / JAL-1 / JCM 10045 / NBRC 100440)</name>
    <name type="common">Methanococcus jannaschii</name>
    <dbReference type="NCBI Taxonomy" id="243232"/>
    <lineage>
        <taxon>Archaea</taxon>
        <taxon>Methanobacteriati</taxon>
        <taxon>Methanobacteriota</taxon>
        <taxon>Methanomada group</taxon>
        <taxon>Methanococci</taxon>
        <taxon>Methanococcales</taxon>
        <taxon>Methanocaldococcaceae</taxon>
        <taxon>Methanocaldococcus</taxon>
    </lineage>
</organism>
<reference key="1">
    <citation type="journal article" date="1996" name="Science">
        <title>Complete genome sequence of the methanogenic archaeon, Methanococcus jannaschii.</title>
        <authorList>
            <person name="Bult C.J."/>
            <person name="White O."/>
            <person name="Olsen G.J."/>
            <person name="Zhou L."/>
            <person name="Fleischmann R.D."/>
            <person name="Sutton G.G."/>
            <person name="Blake J.A."/>
            <person name="FitzGerald L.M."/>
            <person name="Clayton R.A."/>
            <person name="Gocayne J.D."/>
            <person name="Kerlavage A.R."/>
            <person name="Dougherty B.A."/>
            <person name="Tomb J.-F."/>
            <person name="Adams M.D."/>
            <person name="Reich C.I."/>
            <person name="Overbeek R."/>
            <person name="Kirkness E.F."/>
            <person name="Weinstock K.G."/>
            <person name="Merrick J.M."/>
            <person name="Glodek A."/>
            <person name="Scott J.L."/>
            <person name="Geoghagen N.S.M."/>
            <person name="Weidman J.F."/>
            <person name="Fuhrmann J.L."/>
            <person name="Nguyen D."/>
            <person name="Utterback T.R."/>
            <person name="Kelley J.M."/>
            <person name="Peterson J.D."/>
            <person name="Sadow P.W."/>
            <person name="Hanna M.C."/>
            <person name="Cotton M.D."/>
            <person name="Roberts K.M."/>
            <person name="Hurst M.A."/>
            <person name="Kaine B.P."/>
            <person name="Borodovsky M."/>
            <person name="Klenk H.-P."/>
            <person name="Fraser C.M."/>
            <person name="Smith H.O."/>
            <person name="Woese C.R."/>
            <person name="Venter J.C."/>
        </authorList>
    </citation>
    <scope>NUCLEOTIDE SEQUENCE [LARGE SCALE GENOMIC DNA]</scope>
    <source>
        <strain>ATCC 43067 / DSM 2661 / JAL-1 / JCM 10045 / NBRC 100440</strain>
    </source>
</reference>
<reference key="2">
    <citation type="journal article" date="2009" name="Acta Crystallogr. F">
        <title>Structure of dihydrodipicolinate synthase from Methanocaldococcus jannaschii.</title>
        <authorList>
            <person name="Padmanabhan B."/>
            <person name="Strange R.W."/>
            <person name="Antonyuk S.V."/>
            <person name="Ellis M.J."/>
            <person name="Hasnain S.S."/>
            <person name="Iino H."/>
            <person name="Agari Y."/>
            <person name="Bessho Y."/>
            <person name="Yokoyama S."/>
        </authorList>
    </citation>
    <scope>X-RAY CRYSTALLOGRAPHY (2.2 ANGSTROMS)</scope>
    <scope>SUBUNIT</scope>
    <source>
        <strain>ATCC 43067 / DSM 2661 / JAL-1 / JCM 10045 / NBRC 100440</strain>
    </source>
</reference>
<proteinExistence type="evidence at protein level"/>
<comment type="function">
    <text evidence="1">Catalyzes the condensation of (S)-aspartate-beta-semialdehyde [(S)-ASA] and pyruvate to 4-hydroxy-tetrahydrodipicolinate (HTPA).</text>
</comment>
<comment type="catalytic activity">
    <reaction evidence="1">
        <text>L-aspartate 4-semialdehyde + pyruvate = (2S,4S)-4-hydroxy-2,3,4,5-tetrahydrodipicolinate + H2O + H(+)</text>
        <dbReference type="Rhea" id="RHEA:34171"/>
        <dbReference type="ChEBI" id="CHEBI:15361"/>
        <dbReference type="ChEBI" id="CHEBI:15377"/>
        <dbReference type="ChEBI" id="CHEBI:15378"/>
        <dbReference type="ChEBI" id="CHEBI:67139"/>
        <dbReference type="ChEBI" id="CHEBI:537519"/>
        <dbReference type="EC" id="4.3.3.7"/>
    </reaction>
</comment>
<comment type="pathway">
    <text evidence="1">Amino-acid biosynthesis; L-lysine biosynthesis via DAP pathway; (S)-tetrahydrodipicolinate from L-aspartate: step 3/4.</text>
</comment>
<comment type="subunit">
    <text evidence="1 2">Homotetramer; dimer of dimers.</text>
</comment>
<comment type="subcellular location">
    <subcellularLocation>
        <location evidence="1">Cytoplasm</location>
    </subcellularLocation>
</comment>
<comment type="similarity">
    <text evidence="1">Belongs to the DapA family.</text>
</comment>
<comment type="caution">
    <text evidence="3">Was originally thought to be a dihydrodipicolinate synthase (DHDPS), catalyzing the condensation of (S)-aspartate-beta-semialdehyde [(S)-ASA] and pyruvate to dihydrodipicolinate (DHDP). However, it was shown in E.coli that the product of the enzymatic reaction is not dihydrodipicolinate but in fact (4S)-4-hydroxy-2,3,4,5-tetrahydro-(2S)-dipicolinic acid (HTPA), and that the consecutive dehydration reaction leading to DHDP is not spontaneous but catalyzed by DapB.</text>
</comment>
<keyword id="KW-0002">3D-structure</keyword>
<keyword id="KW-0028">Amino-acid biosynthesis</keyword>
<keyword id="KW-0963">Cytoplasm</keyword>
<keyword id="KW-0220">Diaminopimelate biosynthesis</keyword>
<keyword id="KW-0456">Lyase</keyword>
<keyword id="KW-0457">Lysine biosynthesis</keyword>
<keyword id="KW-1185">Reference proteome</keyword>
<keyword id="KW-0704">Schiff base</keyword>
<protein>
    <recommendedName>
        <fullName evidence="1">4-hydroxy-tetrahydrodipicolinate synthase</fullName>
        <shortName evidence="1">HTPA synthase</shortName>
        <ecNumber evidence="1">4.3.3.7</ecNumber>
    </recommendedName>
</protein>
<sequence length="289" mass="31580">MFKGVYPAIITPFKNKEVDFDGLEENINFLIENGVSGIVAVGTTGESPTLSHEEHKKVIEKVVDVVNGRVQVIAGAGSNCTEEAIELSVFAEDVGADAVLSITPYYNKPTQEGLRKHFGKVAESINLPIVLYNVPSRTAVNLEPKTVKLLAEEYSNISAVKEANPNLSQVSELIHDAKITVLSGNDELTLPIIALGGKGVISVVANIVPKEFVEMVNYALEGDFEKAREIHYKLFPLMKAMFIETNPIPVKTALNMMGRPAGELRLPLCEMSEEHKKILENVLKDLGLI</sequence>
<name>DAPA_METJA</name>
<gene>
    <name evidence="1" type="primary">dapA</name>
    <name type="ordered locus">MJ0244</name>
</gene>
<dbReference type="EC" id="4.3.3.7" evidence="1"/>
<dbReference type="EMBL" id="L77117">
    <property type="protein sequence ID" value="AAB98232.1"/>
    <property type="molecule type" value="Genomic_DNA"/>
</dbReference>
<dbReference type="PIR" id="E64330">
    <property type="entry name" value="E64330"/>
</dbReference>
<dbReference type="RefSeq" id="WP_010869742.1">
    <property type="nucleotide sequence ID" value="NC_000909.1"/>
</dbReference>
<dbReference type="PDB" id="2YXG">
    <property type="method" value="X-ray"/>
    <property type="resolution" value="2.20 A"/>
    <property type="chains" value="A/B/C/D=1-289"/>
</dbReference>
<dbReference type="PDBsum" id="2YXG"/>
<dbReference type="SMR" id="Q57695"/>
<dbReference type="FunCoup" id="Q57695">
    <property type="interactions" value="143"/>
</dbReference>
<dbReference type="STRING" id="243232.MJ_0244"/>
<dbReference type="PaxDb" id="243232-MJ_0244"/>
<dbReference type="EnsemblBacteria" id="AAB98232">
    <property type="protein sequence ID" value="AAB98232"/>
    <property type="gene ID" value="MJ_0244"/>
</dbReference>
<dbReference type="GeneID" id="1451098"/>
<dbReference type="KEGG" id="mja:MJ_0244"/>
<dbReference type="eggNOG" id="arCOG04172">
    <property type="taxonomic scope" value="Archaea"/>
</dbReference>
<dbReference type="HOGENOM" id="CLU_049343_7_0_2"/>
<dbReference type="InParanoid" id="Q57695"/>
<dbReference type="OrthoDB" id="33636at2157"/>
<dbReference type="PhylomeDB" id="Q57695"/>
<dbReference type="BRENDA" id="4.3.3.7">
    <property type="organism ID" value="3260"/>
</dbReference>
<dbReference type="UniPathway" id="UPA00034">
    <property type="reaction ID" value="UER00017"/>
</dbReference>
<dbReference type="EvolutionaryTrace" id="Q57695"/>
<dbReference type="Proteomes" id="UP000000805">
    <property type="component" value="Chromosome"/>
</dbReference>
<dbReference type="GO" id="GO:0005737">
    <property type="term" value="C:cytoplasm"/>
    <property type="evidence" value="ECO:0007669"/>
    <property type="project" value="UniProtKB-SubCell"/>
</dbReference>
<dbReference type="GO" id="GO:0008675">
    <property type="term" value="F:2-dehydro-3-deoxy-phosphogluconate aldolase activity"/>
    <property type="evidence" value="ECO:0007669"/>
    <property type="project" value="UniProtKB-ARBA"/>
</dbReference>
<dbReference type="GO" id="GO:0008840">
    <property type="term" value="F:4-hydroxy-tetrahydrodipicolinate synthase activity"/>
    <property type="evidence" value="ECO:0000318"/>
    <property type="project" value="GO_Central"/>
</dbReference>
<dbReference type="GO" id="GO:0019877">
    <property type="term" value="P:diaminopimelate biosynthetic process"/>
    <property type="evidence" value="ECO:0007669"/>
    <property type="project" value="UniProtKB-UniRule"/>
</dbReference>
<dbReference type="GO" id="GO:0009089">
    <property type="term" value="P:lysine biosynthetic process via diaminopimelate"/>
    <property type="evidence" value="ECO:0007669"/>
    <property type="project" value="UniProtKB-UniRule"/>
</dbReference>
<dbReference type="CDD" id="cd00950">
    <property type="entry name" value="DHDPS"/>
    <property type="match status" value="1"/>
</dbReference>
<dbReference type="Gene3D" id="3.20.20.70">
    <property type="entry name" value="Aldolase class I"/>
    <property type="match status" value="1"/>
</dbReference>
<dbReference type="HAMAP" id="MF_00418">
    <property type="entry name" value="DapA"/>
    <property type="match status" value="1"/>
</dbReference>
<dbReference type="InterPro" id="IPR013785">
    <property type="entry name" value="Aldolase_TIM"/>
</dbReference>
<dbReference type="InterPro" id="IPR005263">
    <property type="entry name" value="DapA"/>
</dbReference>
<dbReference type="InterPro" id="IPR002220">
    <property type="entry name" value="DapA-like"/>
</dbReference>
<dbReference type="InterPro" id="IPR020625">
    <property type="entry name" value="Schiff_base-form_aldolases_AS"/>
</dbReference>
<dbReference type="InterPro" id="IPR020624">
    <property type="entry name" value="Schiff_base-form_aldolases_CS"/>
</dbReference>
<dbReference type="NCBIfam" id="TIGR00674">
    <property type="entry name" value="dapA"/>
    <property type="match status" value="1"/>
</dbReference>
<dbReference type="PANTHER" id="PTHR12128:SF66">
    <property type="entry name" value="4-HYDROXY-2-OXOGLUTARATE ALDOLASE, MITOCHONDRIAL"/>
    <property type="match status" value="1"/>
</dbReference>
<dbReference type="PANTHER" id="PTHR12128">
    <property type="entry name" value="DIHYDRODIPICOLINATE SYNTHASE"/>
    <property type="match status" value="1"/>
</dbReference>
<dbReference type="Pfam" id="PF00701">
    <property type="entry name" value="DHDPS"/>
    <property type="match status" value="1"/>
</dbReference>
<dbReference type="PIRSF" id="PIRSF001365">
    <property type="entry name" value="DHDPS"/>
    <property type="match status" value="1"/>
</dbReference>
<dbReference type="PRINTS" id="PR00146">
    <property type="entry name" value="DHPICSNTHASE"/>
</dbReference>
<dbReference type="SMART" id="SM01130">
    <property type="entry name" value="DHDPS"/>
    <property type="match status" value="1"/>
</dbReference>
<dbReference type="SUPFAM" id="SSF51569">
    <property type="entry name" value="Aldolase"/>
    <property type="match status" value="1"/>
</dbReference>
<dbReference type="PROSITE" id="PS00665">
    <property type="entry name" value="DHDPS_1"/>
    <property type="match status" value="1"/>
</dbReference>
<dbReference type="PROSITE" id="PS00666">
    <property type="entry name" value="DHDPS_2"/>
    <property type="match status" value="1"/>
</dbReference>
<evidence type="ECO:0000255" key="1">
    <source>
        <dbReference type="HAMAP-Rule" id="MF_00418"/>
    </source>
</evidence>
<evidence type="ECO:0000269" key="2">
    <source>
    </source>
</evidence>
<evidence type="ECO:0000305" key="3"/>
<evidence type="ECO:0007829" key="4">
    <source>
        <dbReference type="PDB" id="2YXG"/>
    </source>
</evidence>